<protein>
    <recommendedName>
        <fullName evidence="1">Endoribonuclease YbeY</fullName>
        <ecNumber evidence="1">3.1.-.-</ecNumber>
    </recommendedName>
</protein>
<keyword id="KW-0963">Cytoplasm</keyword>
<keyword id="KW-0255">Endonuclease</keyword>
<keyword id="KW-0378">Hydrolase</keyword>
<keyword id="KW-0479">Metal-binding</keyword>
<keyword id="KW-0540">Nuclease</keyword>
<keyword id="KW-1185">Reference proteome</keyword>
<keyword id="KW-0690">Ribosome biogenesis</keyword>
<keyword id="KW-0698">rRNA processing</keyword>
<keyword id="KW-0862">Zinc</keyword>
<sequence>MDVENDRPPRRGAAGERNSGTMIYPALPATEVLVVAECWRAEAGAEAIIHRAVETAAGMVDTDTGDAELAIMLTDDAGIRTLNANWRGIDKPTNVLSFPALQPTGAPSPDDAPRMLGDIAIAYETLRREACDEHKPFDHHLSHLTIHGFLHLIGYDHETDEEAGEMENLERKILARLGIPDPYAPQERMA</sequence>
<organism>
    <name type="scientific">Nitrobacter hamburgensis (strain DSM 10229 / NCIMB 13809 / X14)</name>
    <dbReference type="NCBI Taxonomy" id="323097"/>
    <lineage>
        <taxon>Bacteria</taxon>
        <taxon>Pseudomonadati</taxon>
        <taxon>Pseudomonadota</taxon>
        <taxon>Alphaproteobacteria</taxon>
        <taxon>Hyphomicrobiales</taxon>
        <taxon>Nitrobacteraceae</taxon>
        <taxon>Nitrobacter</taxon>
    </lineage>
</organism>
<accession>Q1QS72</accession>
<comment type="function">
    <text evidence="1">Single strand-specific metallo-endoribonuclease involved in late-stage 70S ribosome quality control and in maturation of the 3' terminus of the 16S rRNA.</text>
</comment>
<comment type="cofactor">
    <cofactor evidence="1">
        <name>Zn(2+)</name>
        <dbReference type="ChEBI" id="CHEBI:29105"/>
    </cofactor>
    <text evidence="1">Binds 1 zinc ion.</text>
</comment>
<comment type="subcellular location">
    <subcellularLocation>
        <location evidence="1">Cytoplasm</location>
    </subcellularLocation>
</comment>
<comment type="similarity">
    <text evidence="1">Belongs to the endoribonuclease YbeY family.</text>
</comment>
<evidence type="ECO:0000255" key="1">
    <source>
        <dbReference type="HAMAP-Rule" id="MF_00009"/>
    </source>
</evidence>
<evidence type="ECO:0000256" key="2">
    <source>
        <dbReference type="SAM" id="MobiDB-lite"/>
    </source>
</evidence>
<reference key="1">
    <citation type="submission" date="2006-03" db="EMBL/GenBank/DDBJ databases">
        <title>Complete sequence of chromosome of Nitrobacter hamburgensis X14.</title>
        <authorList>
            <consortium name="US DOE Joint Genome Institute"/>
            <person name="Copeland A."/>
            <person name="Lucas S."/>
            <person name="Lapidus A."/>
            <person name="Barry K."/>
            <person name="Detter J.C."/>
            <person name="Glavina del Rio T."/>
            <person name="Hammon N."/>
            <person name="Israni S."/>
            <person name="Dalin E."/>
            <person name="Tice H."/>
            <person name="Pitluck S."/>
            <person name="Chain P."/>
            <person name="Malfatti S."/>
            <person name="Shin M."/>
            <person name="Vergez L."/>
            <person name="Schmutz J."/>
            <person name="Larimer F."/>
            <person name="Land M."/>
            <person name="Hauser L."/>
            <person name="Kyrpides N."/>
            <person name="Ivanova N."/>
            <person name="Ward B."/>
            <person name="Arp D."/>
            <person name="Klotz M."/>
            <person name="Stein L."/>
            <person name="O'Mullan G."/>
            <person name="Starkenburg S."/>
            <person name="Sayavedra L."/>
            <person name="Poret-Peterson A.T."/>
            <person name="Gentry M.E."/>
            <person name="Bruce D."/>
            <person name="Richardson P."/>
        </authorList>
    </citation>
    <scope>NUCLEOTIDE SEQUENCE [LARGE SCALE GENOMIC DNA]</scope>
    <source>
        <strain>DSM 10229 / NCIMB 13809 / X14</strain>
    </source>
</reference>
<name>YBEY_NITHX</name>
<dbReference type="EC" id="3.1.-.-" evidence="1"/>
<dbReference type="EMBL" id="CP000319">
    <property type="protein sequence ID" value="ABE60925.1"/>
    <property type="molecule type" value="Genomic_DNA"/>
</dbReference>
<dbReference type="SMR" id="Q1QS72"/>
<dbReference type="STRING" id="323097.Nham_0023"/>
<dbReference type="KEGG" id="nha:Nham_0023"/>
<dbReference type="eggNOG" id="COG0319">
    <property type="taxonomic scope" value="Bacteria"/>
</dbReference>
<dbReference type="HOGENOM" id="CLU_106710_0_0_5"/>
<dbReference type="Proteomes" id="UP000001953">
    <property type="component" value="Chromosome"/>
</dbReference>
<dbReference type="GO" id="GO:0005737">
    <property type="term" value="C:cytoplasm"/>
    <property type="evidence" value="ECO:0007669"/>
    <property type="project" value="UniProtKB-SubCell"/>
</dbReference>
<dbReference type="GO" id="GO:0004222">
    <property type="term" value="F:metalloendopeptidase activity"/>
    <property type="evidence" value="ECO:0007669"/>
    <property type="project" value="InterPro"/>
</dbReference>
<dbReference type="GO" id="GO:0004521">
    <property type="term" value="F:RNA endonuclease activity"/>
    <property type="evidence" value="ECO:0007669"/>
    <property type="project" value="UniProtKB-UniRule"/>
</dbReference>
<dbReference type="GO" id="GO:0008270">
    <property type="term" value="F:zinc ion binding"/>
    <property type="evidence" value="ECO:0007669"/>
    <property type="project" value="UniProtKB-UniRule"/>
</dbReference>
<dbReference type="GO" id="GO:0006364">
    <property type="term" value="P:rRNA processing"/>
    <property type="evidence" value="ECO:0007669"/>
    <property type="project" value="UniProtKB-UniRule"/>
</dbReference>
<dbReference type="Gene3D" id="3.40.390.30">
    <property type="entry name" value="Metalloproteases ('zincins'), catalytic domain"/>
    <property type="match status" value="1"/>
</dbReference>
<dbReference type="HAMAP" id="MF_00009">
    <property type="entry name" value="Endoribonucl_YbeY"/>
    <property type="match status" value="1"/>
</dbReference>
<dbReference type="InterPro" id="IPR023091">
    <property type="entry name" value="MetalPrtase_cat_dom_sf_prd"/>
</dbReference>
<dbReference type="InterPro" id="IPR002036">
    <property type="entry name" value="YbeY"/>
</dbReference>
<dbReference type="InterPro" id="IPR020549">
    <property type="entry name" value="YbeY_CS"/>
</dbReference>
<dbReference type="NCBIfam" id="TIGR00043">
    <property type="entry name" value="rRNA maturation RNase YbeY"/>
    <property type="match status" value="1"/>
</dbReference>
<dbReference type="PANTHER" id="PTHR46986">
    <property type="entry name" value="ENDORIBONUCLEASE YBEY, CHLOROPLASTIC"/>
    <property type="match status" value="1"/>
</dbReference>
<dbReference type="PANTHER" id="PTHR46986:SF1">
    <property type="entry name" value="ENDORIBONUCLEASE YBEY, CHLOROPLASTIC"/>
    <property type="match status" value="1"/>
</dbReference>
<dbReference type="Pfam" id="PF02130">
    <property type="entry name" value="YbeY"/>
    <property type="match status" value="1"/>
</dbReference>
<dbReference type="SUPFAM" id="SSF55486">
    <property type="entry name" value="Metalloproteases ('zincins'), catalytic domain"/>
    <property type="match status" value="1"/>
</dbReference>
<dbReference type="PROSITE" id="PS01306">
    <property type="entry name" value="UPF0054"/>
    <property type="match status" value="1"/>
</dbReference>
<gene>
    <name evidence="1" type="primary">ybeY</name>
    <name type="ordered locus">Nham_0023</name>
</gene>
<feature type="chain" id="PRO_0000284255" description="Endoribonuclease YbeY">
    <location>
        <begin position="1"/>
        <end position="190"/>
    </location>
</feature>
<feature type="region of interest" description="Disordered" evidence="2">
    <location>
        <begin position="1"/>
        <end position="20"/>
    </location>
</feature>
<feature type="binding site" evidence="1">
    <location>
        <position position="147"/>
    </location>
    <ligand>
        <name>Zn(2+)</name>
        <dbReference type="ChEBI" id="CHEBI:29105"/>
        <note>catalytic</note>
    </ligand>
</feature>
<feature type="binding site" evidence="1">
    <location>
        <position position="151"/>
    </location>
    <ligand>
        <name>Zn(2+)</name>
        <dbReference type="ChEBI" id="CHEBI:29105"/>
        <note>catalytic</note>
    </ligand>
</feature>
<feature type="binding site" evidence="1">
    <location>
        <position position="157"/>
    </location>
    <ligand>
        <name>Zn(2+)</name>
        <dbReference type="ChEBI" id="CHEBI:29105"/>
        <note>catalytic</note>
    </ligand>
</feature>
<proteinExistence type="inferred from homology"/>